<reference key="1">
    <citation type="journal article" date="2010" name="Stand. Genomic Sci.">
        <title>Complete genome sequence of Rhizobium leguminosarum bv trifolii strain WSM2304, an effective microsymbiont of the South American clover Trifolium polymorphum.</title>
        <authorList>
            <person name="Reeve W."/>
            <person name="O'Hara G."/>
            <person name="Chain P."/>
            <person name="Ardley J."/>
            <person name="Brau L."/>
            <person name="Nandesena K."/>
            <person name="Tiwari R."/>
            <person name="Malfatti S."/>
            <person name="Kiss H."/>
            <person name="Lapidus A."/>
            <person name="Copeland A."/>
            <person name="Nolan M."/>
            <person name="Land M."/>
            <person name="Ivanova N."/>
            <person name="Mavromatis K."/>
            <person name="Markowitz V."/>
            <person name="Kyrpides N."/>
            <person name="Melino V."/>
            <person name="Denton M."/>
            <person name="Yates R."/>
            <person name="Howieson J."/>
        </authorList>
    </citation>
    <scope>NUCLEOTIDE SEQUENCE [LARGE SCALE GENOMIC DNA]</scope>
    <source>
        <strain>WSM2304</strain>
    </source>
</reference>
<proteinExistence type="inferred from homology"/>
<accession>B5ZYL4</accession>
<comment type="function">
    <text evidence="1">NDH-1 shuttles electrons from NADH, via FMN and iron-sulfur (Fe-S) centers, to quinones in the respiratory chain. The immediate electron acceptor for the enzyme in this species is believed to be ubiquinone. Couples the redox reaction to proton translocation (for every two electrons transferred, four hydrogen ions are translocated across the cytoplasmic membrane), and thus conserves the redox energy in a proton gradient.</text>
</comment>
<comment type="catalytic activity">
    <reaction evidence="1">
        <text>a quinone + NADH + 5 H(+)(in) = a quinol + NAD(+) + 4 H(+)(out)</text>
        <dbReference type="Rhea" id="RHEA:57888"/>
        <dbReference type="ChEBI" id="CHEBI:15378"/>
        <dbReference type="ChEBI" id="CHEBI:24646"/>
        <dbReference type="ChEBI" id="CHEBI:57540"/>
        <dbReference type="ChEBI" id="CHEBI:57945"/>
        <dbReference type="ChEBI" id="CHEBI:132124"/>
    </reaction>
</comment>
<comment type="subunit">
    <text evidence="1">NDH-1 is composed of 14 different subunits. Subunits NuoB, C, D, E, F, and G constitute the peripheral sector of the complex.</text>
</comment>
<comment type="subcellular location">
    <subcellularLocation>
        <location evidence="1">Cell inner membrane</location>
        <topology evidence="1">Peripheral membrane protein</topology>
        <orientation evidence="1">Cytoplasmic side</orientation>
    </subcellularLocation>
</comment>
<comment type="similarity">
    <text evidence="1">Belongs to the complex I 30 kDa subunit family.</text>
</comment>
<evidence type="ECO:0000255" key="1">
    <source>
        <dbReference type="HAMAP-Rule" id="MF_01357"/>
    </source>
</evidence>
<protein>
    <recommendedName>
        <fullName evidence="1">NADH-quinone oxidoreductase subunit C</fullName>
        <ecNumber evidence="1">7.1.1.-</ecNumber>
    </recommendedName>
    <alternativeName>
        <fullName evidence="1">NADH dehydrogenase I subunit C</fullName>
    </alternativeName>
    <alternativeName>
        <fullName evidence="1">NDH-1 subunit C</fullName>
    </alternativeName>
</protein>
<sequence>MSEALTELASYLGEARGNLIAASQMKYGELTLTTTGENLIALLTFLRDDAKCGFVNLIDICGVDWPQRELRFDVVYHLLSPKQNVRIRVKVATDEDTPVPSACAVHPGADWFERETWDMYGVLFTGHPDLRRILTDYGFEGHPLRKDFPTTGFVEVRYDDAAKRVVYEPVELKQEFRNFDFMSPWEGTDYVLPGDEKAKQ</sequence>
<feature type="chain" id="PRO_1000143679" description="NADH-quinone oxidoreductase subunit C">
    <location>
        <begin position="1"/>
        <end position="200"/>
    </location>
</feature>
<dbReference type="EC" id="7.1.1.-" evidence="1"/>
<dbReference type="EMBL" id="CP001191">
    <property type="protein sequence ID" value="ACI54555.1"/>
    <property type="molecule type" value="Genomic_DNA"/>
</dbReference>
<dbReference type="RefSeq" id="WP_012557330.1">
    <property type="nucleotide sequence ID" value="NC_011369.1"/>
</dbReference>
<dbReference type="SMR" id="B5ZYL4"/>
<dbReference type="STRING" id="395492.Rleg2_1261"/>
<dbReference type="KEGG" id="rlt:Rleg2_1261"/>
<dbReference type="eggNOG" id="COG0852">
    <property type="taxonomic scope" value="Bacteria"/>
</dbReference>
<dbReference type="HOGENOM" id="CLU_042628_2_1_5"/>
<dbReference type="Proteomes" id="UP000008330">
    <property type="component" value="Chromosome"/>
</dbReference>
<dbReference type="GO" id="GO:0005886">
    <property type="term" value="C:plasma membrane"/>
    <property type="evidence" value="ECO:0007669"/>
    <property type="project" value="UniProtKB-SubCell"/>
</dbReference>
<dbReference type="GO" id="GO:0008137">
    <property type="term" value="F:NADH dehydrogenase (ubiquinone) activity"/>
    <property type="evidence" value="ECO:0007669"/>
    <property type="project" value="InterPro"/>
</dbReference>
<dbReference type="GO" id="GO:0050136">
    <property type="term" value="F:NADH:ubiquinone reductase (non-electrogenic) activity"/>
    <property type="evidence" value="ECO:0007669"/>
    <property type="project" value="UniProtKB-UniRule"/>
</dbReference>
<dbReference type="GO" id="GO:0048038">
    <property type="term" value="F:quinone binding"/>
    <property type="evidence" value="ECO:0007669"/>
    <property type="project" value="UniProtKB-KW"/>
</dbReference>
<dbReference type="Gene3D" id="3.30.460.80">
    <property type="entry name" value="NADH:ubiquinone oxidoreductase, 30kDa subunit"/>
    <property type="match status" value="1"/>
</dbReference>
<dbReference type="HAMAP" id="MF_01357">
    <property type="entry name" value="NDH1_NuoC"/>
    <property type="match status" value="1"/>
</dbReference>
<dbReference type="InterPro" id="IPR010218">
    <property type="entry name" value="NADH_DH_suC"/>
</dbReference>
<dbReference type="InterPro" id="IPR037232">
    <property type="entry name" value="NADH_quin_OxRdtase_su_C/D-like"/>
</dbReference>
<dbReference type="InterPro" id="IPR001268">
    <property type="entry name" value="NADH_UbQ_OxRdtase_30kDa_su"/>
</dbReference>
<dbReference type="InterPro" id="IPR020396">
    <property type="entry name" value="NADH_UbQ_OxRdtase_CS"/>
</dbReference>
<dbReference type="NCBIfam" id="TIGR01961">
    <property type="entry name" value="NuoC_fam"/>
    <property type="match status" value="1"/>
</dbReference>
<dbReference type="NCBIfam" id="NF004733">
    <property type="entry name" value="PRK06074.1-5"/>
    <property type="match status" value="1"/>
</dbReference>
<dbReference type="PANTHER" id="PTHR10884:SF14">
    <property type="entry name" value="NADH DEHYDROGENASE [UBIQUINONE] IRON-SULFUR PROTEIN 3, MITOCHONDRIAL"/>
    <property type="match status" value="1"/>
</dbReference>
<dbReference type="PANTHER" id="PTHR10884">
    <property type="entry name" value="NADH DEHYDROGENASE UBIQUINONE IRON-SULFUR PROTEIN 3"/>
    <property type="match status" value="1"/>
</dbReference>
<dbReference type="Pfam" id="PF00329">
    <property type="entry name" value="Complex1_30kDa"/>
    <property type="match status" value="1"/>
</dbReference>
<dbReference type="SUPFAM" id="SSF143243">
    <property type="entry name" value="Nqo5-like"/>
    <property type="match status" value="1"/>
</dbReference>
<dbReference type="PROSITE" id="PS00542">
    <property type="entry name" value="COMPLEX1_30K"/>
    <property type="match status" value="1"/>
</dbReference>
<organism>
    <name type="scientific">Rhizobium leguminosarum bv. trifolii (strain WSM2304)</name>
    <dbReference type="NCBI Taxonomy" id="395492"/>
    <lineage>
        <taxon>Bacteria</taxon>
        <taxon>Pseudomonadati</taxon>
        <taxon>Pseudomonadota</taxon>
        <taxon>Alphaproteobacteria</taxon>
        <taxon>Hyphomicrobiales</taxon>
        <taxon>Rhizobiaceae</taxon>
        <taxon>Rhizobium/Agrobacterium group</taxon>
        <taxon>Rhizobium</taxon>
    </lineage>
</organism>
<gene>
    <name evidence="1" type="primary">nuoC</name>
    <name type="ordered locus">Rleg2_1261</name>
</gene>
<keyword id="KW-0997">Cell inner membrane</keyword>
<keyword id="KW-1003">Cell membrane</keyword>
<keyword id="KW-0472">Membrane</keyword>
<keyword id="KW-0520">NAD</keyword>
<keyword id="KW-0874">Quinone</keyword>
<keyword id="KW-1185">Reference proteome</keyword>
<keyword id="KW-1278">Translocase</keyword>
<keyword id="KW-0813">Transport</keyword>
<keyword id="KW-0830">Ubiquinone</keyword>
<name>NUOC_RHILW</name>